<reference key="1">
    <citation type="journal article" date="1989" name="Virology">
        <title>The B allele of the NS gene of avian influenza viruses, but not the A allele, attenuates a human influenza A virus for squirrel monkeys.</title>
        <authorList>
            <person name="Treanor J.J."/>
            <person name="Snyder M.H."/>
            <person name="London W.T."/>
            <person name="Murphy B.R."/>
        </authorList>
    </citation>
    <scope>NUCLEOTIDE SEQUENCE [GENOMIC RNA]</scope>
</reference>
<reference key="2">
    <citation type="journal article" date="2003" name="Virology">
        <title>Intracellular warfare between human influenza viruses and human cells: the roles of the viral NS1 protein.</title>
        <authorList>
            <person name="Krug R.M."/>
            <person name="Yuan W."/>
            <person name="Noah D.L."/>
            <person name="Latham A.G."/>
        </authorList>
    </citation>
    <scope>REVIEW</scope>
</reference>
<accession>P69417</accession>
<accession>P13138</accession>
<organismHost>
    <name type="scientific">Aves</name>
    <dbReference type="NCBI Taxonomy" id="8782"/>
</organismHost>
<organismHost>
    <name type="scientific">Homo sapiens</name>
    <name type="common">Human</name>
    <dbReference type="NCBI Taxonomy" id="9606"/>
</organismHost>
<gene>
    <name evidence="1" type="primary">NS</name>
</gene>
<evidence type="ECO:0000255" key="1">
    <source>
        <dbReference type="HAMAP-Rule" id="MF_04066"/>
    </source>
</evidence>
<evidence type="ECO:0000256" key="2">
    <source>
        <dbReference type="SAM" id="MobiDB-lite"/>
    </source>
</evidence>
<feature type="chain" id="PRO_0000078938" description="Non-structural protein 1">
    <location>
        <begin position="1"/>
        <end position="230"/>
    </location>
</feature>
<feature type="region of interest" description="RNA-binding and homodimerization" evidence="1">
    <location>
        <begin position="1"/>
        <end position="73"/>
    </location>
</feature>
<feature type="region of interest" description="CPSF4-binding" evidence="1">
    <location>
        <begin position="180"/>
        <end position="215"/>
    </location>
</feature>
<feature type="region of interest" description="Disordered" evidence="2">
    <location>
        <begin position="205"/>
        <end position="230"/>
    </location>
</feature>
<feature type="region of interest" description="PABPN1-binding" evidence="1">
    <location>
        <begin position="223"/>
        <end position="230"/>
    </location>
</feature>
<feature type="short sequence motif" description="Nuclear localization signal" evidence="1">
    <location>
        <begin position="34"/>
        <end position="38"/>
    </location>
</feature>
<feature type="short sequence motif" description="Nuclear export signal" evidence="1">
    <location>
        <begin position="137"/>
        <end position="146"/>
    </location>
</feature>
<comment type="function">
    <text evidence="1">Inhibits post-transcriptional processing of cellular pre-mRNA, by binding and inhibiting two cellular proteins that are required for the 3'-end processing of cellular pre-mRNAs: the 30 kDa cleavage and polyadenylation specificity factor/CPSF4 and the poly(A)-binding protein 2/PABPN1. In turn, unprocessed 3' end pre-mRNAs accumulate in the host nucleus and are no longer exported to the cytoplasm. Cellular protein synthesis is thereby shut off very early after virus infection. Viral protein synthesis is not affected by the inhibition of the cellular 3' end processing machinery because the poly(A) tails of viral mRNAs are produced by the viral polymerase through a stuttering mechanism. Prevents the establishment of the cellular antiviral state by inhibiting TRIM25-mediated RIGI ubiquitination, which normally triggers the antiviral transduction signal that leads to the activation of type I IFN genes by transcription factors IRF3 and IRF7. Also binds poly(A) and U6 snRNA. Inhibits the integrated stress response (ISR) in the infected cell by blocking dsRNA binding by EIF2AK2/PKR and further phosphorylation of EIF2S1/EIF-2ALPHA. Stress granule formation is thus inhibited, which allows protein synthesis and viral replication.</text>
</comment>
<comment type="subunit">
    <text evidence="1">Homodimer. Interacts with host TRIM25 (via coiled coil); this interaction specifically inhibits TRIM25 multimerization and TRIM25-mediated RIGI CARD ubiquitination. Interacts with human EIF2AK2/PKR, CPSF4, IVNS1ABP and PABPN1.</text>
</comment>
<comment type="subcellular location">
    <subcellularLocation>
        <location evidence="1">Host nucleus</location>
    </subcellularLocation>
    <subcellularLocation>
        <location evidence="1">Host cytoplasm</location>
    </subcellularLocation>
    <text evidence="1">In uninfected, transfected cells, NS1 is localized in the nucleus. Only in virus infected cells, the nuclear export signal is unveiled, presumably by a viral protein, and a fraction of NS1 is exported in the cytoplasm.</text>
</comment>
<comment type="alternative products">
    <event type="alternative splicing"/>
    <isoform>
        <id>P69417-1</id>
        <name>NS1</name>
        <sequence type="displayed"/>
    </isoform>
    <isoform>
        <id>P21527-1</id>
        <name>NEP</name>
        <name>NS2</name>
        <sequence type="external"/>
    </isoform>
</comment>
<comment type="domain">
    <text evidence="1">The dsRNA-binding region is required for suppression of RNA silencing.</text>
</comment>
<comment type="PTM">
    <text evidence="1">Upon interferon induction, ISGylated via host HERC5; this results in the impairment of NS1 interaction with RNA targets due to its inability to form homodimers and to interact with host EIF2AK2/PKR.</text>
</comment>
<comment type="similarity">
    <text evidence="1">Belongs to the influenza A viruses NS1 family.</text>
</comment>
<organism>
    <name type="scientific">Influenza A virus (strain A/Mallard/New York/6750/1978 H2N2)</name>
    <dbReference type="NCBI Taxonomy" id="384502"/>
    <lineage>
        <taxon>Viruses</taxon>
        <taxon>Riboviria</taxon>
        <taxon>Orthornavirae</taxon>
        <taxon>Negarnaviricota</taxon>
        <taxon>Polyploviricotina</taxon>
        <taxon>Insthoviricetes</taxon>
        <taxon>Articulavirales</taxon>
        <taxon>Orthomyxoviridae</taxon>
        <taxon>Alphainfluenzavirus</taxon>
        <taxon>Alphainfluenzavirus influenzae</taxon>
        <taxon>Influenza A virus</taxon>
    </lineage>
</organism>
<proteinExistence type="inferred from homology"/>
<name>NS1_I78A3</name>
<dbReference type="EMBL" id="M25376">
    <property type="protein sequence ID" value="AAA43547.1"/>
    <property type="molecule type" value="Genomic_RNA"/>
</dbReference>
<dbReference type="PIR" id="C32662">
    <property type="entry name" value="MNIVA2"/>
</dbReference>
<dbReference type="SMR" id="P69417"/>
<dbReference type="Proteomes" id="UP000098172">
    <property type="component" value="Genome"/>
</dbReference>
<dbReference type="GO" id="GO:0030430">
    <property type="term" value="C:host cell cytoplasm"/>
    <property type="evidence" value="ECO:0007669"/>
    <property type="project" value="UniProtKB-SubCell"/>
</dbReference>
<dbReference type="GO" id="GO:0042025">
    <property type="term" value="C:host cell nucleus"/>
    <property type="evidence" value="ECO:0007669"/>
    <property type="project" value="UniProtKB-SubCell"/>
</dbReference>
<dbReference type="GO" id="GO:0030291">
    <property type="term" value="F:protein serine/threonine kinase inhibitor activity"/>
    <property type="evidence" value="ECO:0007669"/>
    <property type="project" value="UniProtKB-KW"/>
</dbReference>
<dbReference type="GO" id="GO:0003723">
    <property type="term" value="F:RNA binding"/>
    <property type="evidence" value="ECO:0007669"/>
    <property type="project" value="UniProtKB-KW"/>
</dbReference>
<dbReference type="GO" id="GO:0039540">
    <property type="term" value="P:symbiont-mediated suppression of host cytoplasmic pattern recognition receptor signaling pathway via inhibition of RIG-I activity"/>
    <property type="evidence" value="ECO:0007669"/>
    <property type="project" value="UniProtKB-KW"/>
</dbReference>
<dbReference type="GO" id="GO:0039657">
    <property type="term" value="P:symbiont-mediated suppression of host gene expression"/>
    <property type="evidence" value="ECO:0007669"/>
    <property type="project" value="UniProtKB-KW"/>
</dbReference>
<dbReference type="GO" id="GO:0039524">
    <property type="term" value="P:symbiont-mediated suppression of host mRNA processing"/>
    <property type="evidence" value="ECO:0007669"/>
    <property type="project" value="UniProtKB-KW"/>
</dbReference>
<dbReference type="GO" id="GO:0039580">
    <property type="term" value="P:symbiont-mediated suppression of host PKR/eIFalpha signaling"/>
    <property type="evidence" value="ECO:0007669"/>
    <property type="project" value="UniProtKB-KW"/>
</dbReference>
<dbReference type="GO" id="GO:0039502">
    <property type="term" value="P:symbiont-mediated suppression of host type I interferon-mediated signaling pathway"/>
    <property type="evidence" value="ECO:0007669"/>
    <property type="project" value="UniProtKB-KW"/>
</dbReference>
<dbReference type="FunFam" id="1.10.287.10:FF:000001">
    <property type="entry name" value="Non-structural protein 1"/>
    <property type="match status" value="1"/>
</dbReference>
<dbReference type="FunFam" id="3.30.420.330:FF:000001">
    <property type="entry name" value="Non-structural protein 1"/>
    <property type="match status" value="1"/>
</dbReference>
<dbReference type="Gene3D" id="3.30.420.330">
    <property type="entry name" value="Influenza virus non-structural protein, effector domain"/>
    <property type="match status" value="1"/>
</dbReference>
<dbReference type="Gene3D" id="1.10.287.10">
    <property type="entry name" value="S15/NS1, RNA-binding"/>
    <property type="match status" value="1"/>
</dbReference>
<dbReference type="HAMAP" id="MF_04066">
    <property type="entry name" value="INFV_NS1"/>
    <property type="match status" value="1"/>
</dbReference>
<dbReference type="InterPro" id="IPR004208">
    <property type="entry name" value="NS1"/>
</dbReference>
<dbReference type="InterPro" id="IPR000256">
    <property type="entry name" value="NS1A"/>
</dbReference>
<dbReference type="InterPro" id="IPR038064">
    <property type="entry name" value="NS1A_effect_dom-like_sf"/>
</dbReference>
<dbReference type="InterPro" id="IPR009068">
    <property type="entry name" value="uS15_NS1_RNA-bd_sf"/>
</dbReference>
<dbReference type="Pfam" id="PF00600">
    <property type="entry name" value="Flu_NS1"/>
    <property type="match status" value="1"/>
</dbReference>
<dbReference type="SUPFAM" id="SSF143021">
    <property type="entry name" value="Ns1 effector domain-like"/>
    <property type="match status" value="1"/>
</dbReference>
<dbReference type="SUPFAM" id="SSF47060">
    <property type="entry name" value="S15/NS1 RNA-binding domain"/>
    <property type="match status" value="1"/>
</dbReference>
<protein>
    <recommendedName>
        <fullName evidence="1">Non-structural protein 1</fullName>
        <shortName evidence="1">NS1</shortName>
    </recommendedName>
    <alternativeName>
        <fullName evidence="1">NS1A</fullName>
    </alternativeName>
</protein>
<keyword id="KW-0025">Alternative splicing</keyword>
<keyword id="KW-1262">Eukaryotic host gene expression shutoff by virus</keyword>
<keyword id="KW-1035">Host cytoplasm</keyword>
<keyword id="KW-1190">Host gene expression shutoff by virus</keyword>
<keyword id="KW-1192">Host mRNA suppression by virus</keyword>
<keyword id="KW-1048">Host nucleus</keyword>
<keyword id="KW-0945">Host-virus interaction</keyword>
<keyword id="KW-1090">Inhibition of host innate immune response by virus</keyword>
<keyword id="KW-1114">Inhibition of host interferon signaling pathway by virus</keyword>
<keyword id="KW-1102">Inhibition of host PKR by virus</keyword>
<keyword id="KW-1103">Inhibition of host pre-mRNA processing by virus</keyword>
<keyword id="KW-1088">Inhibition of host RIG-I by virus</keyword>
<keyword id="KW-1113">Inhibition of host RLR pathway by virus</keyword>
<keyword id="KW-0922">Interferon antiviral system evasion</keyword>
<keyword id="KW-0694">RNA-binding</keyword>
<keyword id="KW-0832">Ubl conjugation</keyword>
<keyword id="KW-0899">Viral immunoevasion</keyword>
<sequence>MDSNTVSSFQVDCFLWHVRKRFADQELGDAPFLDRLRRDQKSLRGRGSTLGLDIETATRAGKQIVERILEEESDEALKMTIASVPASRYLTDMTLEEMSRDWFMLMPKQKVAGSLCIRMDQAIMDKNIILKANFSVIFDRLETLILLRAFTEEGAIVGEISPLPSLPGHTDEDVKNAIGVLIGGLEWNDNTVRVSETLQRFAWRSSNEDGRPPLPPKQKRKMARTIESEV</sequence>